<protein>
    <recommendedName>
        <fullName evidence="8">AA9 family lytic polysaccharide monooxygenase G</fullName>
        <shortName evidence="8">AtAA9G</shortName>
        <ecNumber evidence="10">1.14.99.56</ecNumber>
    </recommendedName>
    <alternativeName>
        <fullName evidence="9">Cellulase AA9G</fullName>
    </alternativeName>
    <alternativeName>
        <fullName evidence="9">Endo-beta-1,4-glucanase AA9G</fullName>
        <shortName evidence="9">Endoglucanase AA9G</shortName>
    </alternativeName>
    <alternativeName>
        <fullName evidence="9">Glycosyl hydrolase 61 family protein AA9G</fullName>
    </alternativeName>
</protein>
<name>LP9G_ASPTM</name>
<reference key="1">
    <citation type="journal article" date="2020" name="Nat. Commun.">
        <title>A comparative genomics study of 23 Aspergillus species from section Flavi.</title>
        <authorList>
            <person name="Kjaerboelling I."/>
            <person name="Vesth T."/>
            <person name="Frisvad J.C."/>
            <person name="Nybo J.L."/>
            <person name="Theobald S."/>
            <person name="Kildgaard S."/>
            <person name="Petersen T.I."/>
            <person name="Kuo A."/>
            <person name="Sato A."/>
            <person name="Lyhne E.K."/>
            <person name="Kogle M.E."/>
            <person name="Wiebenga A."/>
            <person name="Kun R.S."/>
            <person name="Lubbers R.J.M."/>
            <person name="Maekelae M.R."/>
            <person name="Barry K."/>
            <person name="Chovatia M."/>
            <person name="Clum A."/>
            <person name="Daum C."/>
            <person name="Haridas S."/>
            <person name="He G."/>
            <person name="LaButti K."/>
            <person name="Lipzen A."/>
            <person name="Mondo S."/>
            <person name="Pangilinan J."/>
            <person name="Riley R."/>
            <person name="Salamov A."/>
            <person name="Simmons B.A."/>
            <person name="Magnuson J.K."/>
            <person name="Henrissat B."/>
            <person name="Mortensen U.H."/>
            <person name="Larsen T.O."/>
            <person name="de Vries R.P."/>
            <person name="Grigoriev I.V."/>
            <person name="Machida M."/>
            <person name="Baker S.E."/>
            <person name="Andersen M.R."/>
        </authorList>
    </citation>
    <scope>NUCLEOTIDE SEQUENCE [LARGE SCALE GENOMIC DNA]</scope>
    <source>
        <strain>CBS 117626</strain>
    </source>
</reference>
<reference key="2">
    <citation type="journal article" date="2018" name="Front. Bioeng. Biotechnol.">
        <title>Analysis of the Transcriptome in Aspergillus tamarii During Enzymatic Degradation of Sugarcane Bagasse.</title>
        <authorList>
            <person name="Midorikawa G.E.O."/>
            <person name="Correa C.L."/>
            <person name="Noronha E.F."/>
            <person name="Filho E.X.F."/>
            <person name="Togawa R.C."/>
            <person name="Costa M.M.D.C."/>
            <person name="Silva-Junior O.B."/>
            <person name="Grynberg P."/>
            <person name="Miller R.N.G."/>
        </authorList>
    </citation>
    <scope>INDUCTION</scope>
</reference>
<reference key="3">
    <citation type="journal article" date="2020" name="PLoS ONE">
        <title>Characterization of two family AA9 LPMOs from Aspergillus tamarii with distinct activities on xyloglucan reveals structural differences linked to cleavage specificity.</title>
        <authorList>
            <person name="Monclaro A.V."/>
            <person name="Petrovic D.M."/>
            <person name="Alves G.S.C."/>
            <person name="Costa M.M.C."/>
            <person name="Midorikawa G.E.O."/>
            <person name="Miller R.N.G."/>
            <person name="Filho E.X.F."/>
            <person name="Eijsink V.G.H."/>
            <person name="Varnai A."/>
        </authorList>
    </citation>
    <scope>FUNCTION</scope>
    <scope>CATALYTIC ACTIVITY</scope>
</reference>
<gene>
    <name type="ORF">BDV40DRAFT_288991</name>
</gene>
<evidence type="ECO:0000250" key="1">
    <source>
        <dbReference type="UniProtKB" id="Q1K8B6"/>
    </source>
</evidence>
<evidence type="ECO:0000250" key="2">
    <source>
        <dbReference type="UniProtKB" id="Q4WP32"/>
    </source>
</evidence>
<evidence type="ECO:0000250" key="3">
    <source>
        <dbReference type="UniProtKB" id="Q7S439"/>
    </source>
</evidence>
<evidence type="ECO:0000255" key="4"/>
<evidence type="ECO:0000255" key="5">
    <source>
        <dbReference type="PROSITE-ProRule" id="PRU00498"/>
    </source>
</evidence>
<evidence type="ECO:0000255" key="6">
    <source>
        <dbReference type="PROSITE-ProRule" id="PRU00597"/>
    </source>
</evidence>
<evidence type="ECO:0000269" key="7">
    <source>
    </source>
</evidence>
<evidence type="ECO:0000303" key="8">
    <source>
    </source>
</evidence>
<evidence type="ECO:0000305" key="9"/>
<evidence type="ECO:0000305" key="10">
    <source>
    </source>
</evidence>
<sequence length="327" mass="34780">MKLNLASLCFLASIAPLVSGHYVFSKLIVDGKTTKDFEYIRENSNGYQPTLASEIVSNDFRCNKGSMESAAKTKVYTVAPGAEMGFQLAYGASMKHPGPLQIYMSKAPGDVKAYDGSGDWFKVYQEGVCNDISGGLKDTDWCTWGKDTASFKIPENTPPGQYLVRVEHIGLHRGFSGNSEFYFTCAQIEVTGSGSGVPGPLVKIPGVYKPEDPNIHFNIYHPVPTSYDLPGPSVWSGGVSDSSSSISAPPVNNAAAASSVTPTTLVTLSKTSSTPAATSSAAPTSSAPSNGTIKKYYQCGGQGWTGSGSCEAGTSCREWNTWYFQCV</sequence>
<comment type="function">
    <text evidence="10">Lytic polysaccharide monooxygenase (LPMO) that depolymerizes crystalline and amorphous polysaccharides via the oxidation of scissile alpha- or beta-(1-4)-glycosidic bonds, yielding C1 or C4 oxidation products (Probable). Catalysis by LPMOs requires the reduction of the active-site copper from Cu(II) to Cu(I) by a reducing agent and H(2)O(2) or O(2) as a cosubstrate (Probable).</text>
</comment>
<comment type="catalytic activity">
    <reaction evidence="10">
        <text>[(1-&gt;4)-beta-D-glucosyl]n+m + reduced acceptor + O2 = 4-dehydro-beta-D-glucosyl-[(1-&gt;4)-beta-D-glucosyl]n-1 + [(1-&gt;4)-beta-D-glucosyl]m + acceptor + H2O.</text>
        <dbReference type="EC" id="1.14.99.56"/>
    </reaction>
</comment>
<comment type="cofactor">
    <cofactor evidence="2">
        <name>Cu(2+)</name>
        <dbReference type="ChEBI" id="CHEBI:29036"/>
    </cofactor>
    <text evidence="2">Binds 1 copper ion per subunit.</text>
</comment>
<comment type="subcellular location">
    <subcellularLocation>
        <location evidence="10">Secreted</location>
    </subcellularLocation>
</comment>
<comment type="induction">
    <text evidence="7">Expression is up-regulated on steam-exploded bagasse as carbon source compared to glucose.</text>
</comment>
<comment type="domain">
    <text evidence="3">Has a modular structure: an endo-beta-1,4-glucanase catalytic module at the N-terminus, a linker rich in serines and threonines, and a C-terminal carbohydrate-binding module (CBM). The CBM domain is essential for binding to and subsequent oxidative degradation of polysaccharide substrate.</text>
</comment>
<comment type="biotechnology">
    <text evidence="2">Lignocellulose is the most abundant polymeric composite on Earth and is a recalcitrant but promising renewable substrate for industrial biotechnology applications. Together with cellobiose dehydrogenases (CDHs) an enzymatic system capable of oxidative cellulose cleavage is formed, which increases the efficiency of cellulases and put LPMOs at focus of biofuel research.</text>
</comment>
<comment type="similarity">
    <text evidence="9">Belongs to the polysaccharide monooxygenase AA9 family.</text>
</comment>
<organism>
    <name type="scientific">Aspergillus tamarii</name>
    <dbReference type="NCBI Taxonomy" id="41984"/>
    <lineage>
        <taxon>Eukaryota</taxon>
        <taxon>Fungi</taxon>
        <taxon>Dikarya</taxon>
        <taxon>Ascomycota</taxon>
        <taxon>Pezizomycotina</taxon>
        <taxon>Eurotiomycetes</taxon>
        <taxon>Eurotiomycetidae</taxon>
        <taxon>Eurotiales</taxon>
        <taxon>Aspergillaceae</taxon>
        <taxon>Aspergillus</taxon>
        <taxon>Aspergillus subgen. Circumdati</taxon>
    </lineage>
</organism>
<proteinExistence type="evidence at protein level"/>
<feature type="signal peptide" evidence="4">
    <location>
        <begin position="1"/>
        <end position="20"/>
    </location>
</feature>
<feature type="chain" id="PRO_5024984867" description="AA9 family lytic polysaccharide monooxygenase G">
    <location>
        <begin position="21"/>
        <end position="327"/>
    </location>
</feature>
<feature type="domain" description="CBM1" evidence="6">
    <location>
        <begin position="291"/>
        <end position="327"/>
    </location>
</feature>
<feature type="binding site" evidence="2">
    <location>
        <position position="21"/>
    </location>
    <ligand>
        <name>Cu(2+)</name>
        <dbReference type="ChEBI" id="CHEBI:29036"/>
        <note>catalytic</note>
    </ligand>
</feature>
<feature type="binding site" evidence="2">
    <location>
        <position position="96"/>
    </location>
    <ligand>
        <name>Cu(2+)</name>
        <dbReference type="ChEBI" id="CHEBI:29036"/>
        <note>catalytic</note>
    </ligand>
</feature>
<feature type="binding site" evidence="1">
    <location>
        <position position="172"/>
    </location>
    <ligand>
        <name>O2</name>
        <dbReference type="ChEBI" id="CHEBI:15379"/>
    </ligand>
</feature>
<feature type="binding site" evidence="2">
    <location>
        <position position="182"/>
    </location>
    <ligand>
        <name>Cu(2+)</name>
        <dbReference type="ChEBI" id="CHEBI:29036"/>
        <note>catalytic</note>
    </ligand>
</feature>
<feature type="glycosylation site" description="N-linked (GlcNAc...) asparagine" evidence="5">
    <location>
        <position position="290"/>
    </location>
</feature>
<feature type="disulfide bond" evidence="2">
    <location>
        <begin position="62"/>
        <end position="185"/>
    </location>
</feature>
<accession>A0A5N6UV50</accession>
<dbReference type="EC" id="1.14.99.56" evidence="10"/>
<dbReference type="EMBL" id="ML738636">
    <property type="protein sequence ID" value="KAE8161891.1"/>
    <property type="molecule type" value="Genomic_DNA"/>
</dbReference>
<dbReference type="SMR" id="A0A5N6UV50"/>
<dbReference type="OrthoDB" id="3496539at2759"/>
<dbReference type="Proteomes" id="UP000326950">
    <property type="component" value="Unassembled WGS sequence"/>
</dbReference>
<dbReference type="GO" id="GO:0005576">
    <property type="term" value="C:extracellular region"/>
    <property type="evidence" value="ECO:0007669"/>
    <property type="project" value="UniProtKB-SubCell"/>
</dbReference>
<dbReference type="GO" id="GO:0008810">
    <property type="term" value="F:cellulase activity"/>
    <property type="evidence" value="ECO:0007669"/>
    <property type="project" value="UniProtKB-EC"/>
</dbReference>
<dbReference type="GO" id="GO:0030248">
    <property type="term" value="F:cellulose binding"/>
    <property type="evidence" value="ECO:0007669"/>
    <property type="project" value="InterPro"/>
</dbReference>
<dbReference type="GO" id="GO:0046872">
    <property type="term" value="F:metal ion binding"/>
    <property type="evidence" value="ECO:0007669"/>
    <property type="project" value="UniProtKB-KW"/>
</dbReference>
<dbReference type="GO" id="GO:0004497">
    <property type="term" value="F:monooxygenase activity"/>
    <property type="evidence" value="ECO:0007669"/>
    <property type="project" value="UniProtKB-KW"/>
</dbReference>
<dbReference type="GO" id="GO:0030245">
    <property type="term" value="P:cellulose catabolic process"/>
    <property type="evidence" value="ECO:0007669"/>
    <property type="project" value="UniProtKB-KW"/>
</dbReference>
<dbReference type="CDD" id="cd21175">
    <property type="entry name" value="LPMO_AA9"/>
    <property type="match status" value="1"/>
</dbReference>
<dbReference type="Gene3D" id="2.70.50.70">
    <property type="match status" value="1"/>
</dbReference>
<dbReference type="InterPro" id="IPR049892">
    <property type="entry name" value="AA9"/>
</dbReference>
<dbReference type="InterPro" id="IPR005103">
    <property type="entry name" value="AA9_LPMO"/>
</dbReference>
<dbReference type="InterPro" id="IPR035971">
    <property type="entry name" value="CBD_sf"/>
</dbReference>
<dbReference type="InterPro" id="IPR000254">
    <property type="entry name" value="Cellulose-bd_dom_fun"/>
</dbReference>
<dbReference type="PANTHER" id="PTHR33353:SF2">
    <property type="entry name" value="ENDO-BETA-1,4-GLUCANASE D"/>
    <property type="match status" value="1"/>
</dbReference>
<dbReference type="PANTHER" id="PTHR33353">
    <property type="entry name" value="PUTATIVE (AFU_ORTHOLOGUE AFUA_1G12560)-RELATED"/>
    <property type="match status" value="1"/>
</dbReference>
<dbReference type="Pfam" id="PF03443">
    <property type="entry name" value="AA9"/>
    <property type="match status" value="1"/>
</dbReference>
<dbReference type="Pfam" id="PF00734">
    <property type="entry name" value="CBM_1"/>
    <property type="match status" value="1"/>
</dbReference>
<dbReference type="SMART" id="SM00236">
    <property type="entry name" value="fCBD"/>
    <property type="match status" value="1"/>
</dbReference>
<dbReference type="SUPFAM" id="SSF57180">
    <property type="entry name" value="Cellulose-binding domain"/>
    <property type="match status" value="1"/>
</dbReference>
<dbReference type="PROSITE" id="PS00562">
    <property type="entry name" value="CBM1_1"/>
    <property type="match status" value="1"/>
</dbReference>
<dbReference type="PROSITE" id="PS51164">
    <property type="entry name" value="CBM1_2"/>
    <property type="match status" value="1"/>
</dbReference>
<keyword id="KW-0119">Carbohydrate metabolism</keyword>
<keyword id="KW-0136">Cellulose degradation</keyword>
<keyword id="KW-0186">Copper</keyword>
<keyword id="KW-1015">Disulfide bond</keyword>
<keyword id="KW-0325">Glycoprotein</keyword>
<keyword id="KW-0479">Metal-binding</keyword>
<keyword id="KW-0503">Monooxygenase</keyword>
<keyword id="KW-0560">Oxidoreductase</keyword>
<keyword id="KW-0624">Polysaccharide degradation</keyword>
<keyword id="KW-1185">Reference proteome</keyword>
<keyword id="KW-0964">Secreted</keyword>
<keyword id="KW-0732">Signal</keyword>